<keyword id="KW-1185">Reference proteome</keyword>
<keyword id="KW-0687">Ribonucleoprotein</keyword>
<keyword id="KW-0689">Ribosomal protein</keyword>
<comment type="subunit">
    <text evidence="1">Part of the 50S ribosomal subunit.</text>
</comment>
<comment type="similarity">
    <text evidence="1">Belongs to the universal ribosomal protein uL30 family.</text>
</comment>
<gene>
    <name evidence="1" type="primary">rpmD</name>
    <name type="ordered locus">CV_4168</name>
</gene>
<accession>Q7NQH0</accession>
<dbReference type="EMBL" id="AE016825">
    <property type="protein sequence ID" value="AAQ61828.1"/>
    <property type="molecule type" value="Genomic_DNA"/>
</dbReference>
<dbReference type="RefSeq" id="WP_011137715.1">
    <property type="nucleotide sequence ID" value="NC_005085.1"/>
</dbReference>
<dbReference type="SMR" id="Q7NQH0"/>
<dbReference type="STRING" id="243365.CV_4168"/>
<dbReference type="GeneID" id="97477833"/>
<dbReference type="KEGG" id="cvi:CV_4168"/>
<dbReference type="eggNOG" id="COG1841">
    <property type="taxonomic scope" value="Bacteria"/>
</dbReference>
<dbReference type="HOGENOM" id="CLU_131047_1_4_4"/>
<dbReference type="OrthoDB" id="9812790at2"/>
<dbReference type="Proteomes" id="UP000001424">
    <property type="component" value="Chromosome"/>
</dbReference>
<dbReference type="GO" id="GO:0022625">
    <property type="term" value="C:cytosolic large ribosomal subunit"/>
    <property type="evidence" value="ECO:0007669"/>
    <property type="project" value="TreeGrafter"/>
</dbReference>
<dbReference type="GO" id="GO:0003735">
    <property type="term" value="F:structural constituent of ribosome"/>
    <property type="evidence" value="ECO:0007669"/>
    <property type="project" value="InterPro"/>
</dbReference>
<dbReference type="GO" id="GO:0006412">
    <property type="term" value="P:translation"/>
    <property type="evidence" value="ECO:0007669"/>
    <property type="project" value="UniProtKB-UniRule"/>
</dbReference>
<dbReference type="CDD" id="cd01658">
    <property type="entry name" value="Ribosomal_L30"/>
    <property type="match status" value="1"/>
</dbReference>
<dbReference type="FunFam" id="3.30.1390.20:FF:000001">
    <property type="entry name" value="50S ribosomal protein L30"/>
    <property type="match status" value="1"/>
</dbReference>
<dbReference type="Gene3D" id="3.30.1390.20">
    <property type="entry name" value="Ribosomal protein L30, ferredoxin-like fold domain"/>
    <property type="match status" value="1"/>
</dbReference>
<dbReference type="HAMAP" id="MF_01371_B">
    <property type="entry name" value="Ribosomal_uL30_B"/>
    <property type="match status" value="1"/>
</dbReference>
<dbReference type="InterPro" id="IPR036919">
    <property type="entry name" value="Ribo_uL30_ferredoxin-like_sf"/>
</dbReference>
<dbReference type="InterPro" id="IPR005996">
    <property type="entry name" value="Ribosomal_uL30_bac-type"/>
</dbReference>
<dbReference type="InterPro" id="IPR016082">
    <property type="entry name" value="Ribosomal_uL30_ferredoxin-like"/>
</dbReference>
<dbReference type="NCBIfam" id="TIGR01308">
    <property type="entry name" value="rpmD_bact"/>
    <property type="match status" value="1"/>
</dbReference>
<dbReference type="PANTHER" id="PTHR15892:SF2">
    <property type="entry name" value="LARGE RIBOSOMAL SUBUNIT PROTEIN UL30M"/>
    <property type="match status" value="1"/>
</dbReference>
<dbReference type="PANTHER" id="PTHR15892">
    <property type="entry name" value="MITOCHONDRIAL RIBOSOMAL PROTEIN L30"/>
    <property type="match status" value="1"/>
</dbReference>
<dbReference type="Pfam" id="PF00327">
    <property type="entry name" value="Ribosomal_L30"/>
    <property type="match status" value="1"/>
</dbReference>
<dbReference type="PIRSF" id="PIRSF002211">
    <property type="entry name" value="Ribosomal_L30_bac-type"/>
    <property type="match status" value="1"/>
</dbReference>
<dbReference type="SUPFAM" id="SSF55129">
    <property type="entry name" value="Ribosomal protein L30p/L7e"/>
    <property type="match status" value="1"/>
</dbReference>
<evidence type="ECO:0000255" key="1">
    <source>
        <dbReference type="HAMAP-Rule" id="MF_01371"/>
    </source>
</evidence>
<evidence type="ECO:0000305" key="2"/>
<proteinExistence type="inferred from homology"/>
<protein>
    <recommendedName>
        <fullName evidence="1">Large ribosomal subunit protein uL30</fullName>
    </recommendedName>
    <alternativeName>
        <fullName evidence="2">50S ribosomal protein L30</fullName>
    </alternativeName>
</protein>
<reference key="1">
    <citation type="journal article" date="2003" name="Proc. Natl. Acad. Sci. U.S.A.">
        <title>The complete genome sequence of Chromobacterium violaceum reveals remarkable and exploitable bacterial adaptability.</title>
        <authorList>
            <person name="Vasconcelos A.T.R."/>
            <person name="de Almeida D.F."/>
            <person name="Hungria M."/>
            <person name="Guimaraes C.T."/>
            <person name="Antonio R.V."/>
            <person name="Almeida F.C."/>
            <person name="de Almeida L.G.P."/>
            <person name="de Almeida R."/>
            <person name="Alves-Gomes J.A."/>
            <person name="Andrade E.M."/>
            <person name="Araripe J."/>
            <person name="de Araujo M.F.F."/>
            <person name="Astolfi-Filho S."/>
            <person name="Azevedo V."/>
            <person name="Baptista A.J."/>
            <person name="Bataus L.A.M."/>
            <person name="Batista J.S."/>
            <person name="Belo A."/>
            <person name="van den Berg C."/>
            <person name="Bogo M."/>
            <person name="Bonatto S."/>
            <person name="Bordignon J."/>
            <person name="Brigido M.M."/>
            <person name="Brito C.A."/>
            <person name="Brocchi M."/>
            <person name="Burity H.A."/>
            <person name="Camargo A.A."/>
            <person name="Cardoso D.D.P."/>
            <person name="Carneiro N.P."/>
            <person name="Carraro D.M."/>
            <person name="Carvalho C.M.B."/>
            <person name="Cascardo J.C.M."/>
            <person name="Cavada B.S."/>
            <person name="Chueire L.M.O."/>
            <person name="Creczynski-Pasa T.B."/>
            <person name="Cunha-Junior N.C."/>
            <person name="Fagundes N."/>
            <person name="Falcao C.L."/>
            <person name="Fantinatti F."/>
            <person name="Farias I.P."/>
            <person name="Felipe M.S.S."/>
            <person name="Ferrari L.P."/>
            <person name="Ferro J.A."/>
            <person name="Ferro M.I.T."/>
            <person name="Franco G.R."/>
            <person name="Freitas N.S.A."/>
            <person name="Furlan L.R."/>
            <person name="Gazzinelli R.T."/>
            <person name="Gomes E.A."/>
            <person name="Goncalves P.R."/>
            <person name="Grangeiro T.B."/>
            <person name="Grattapaglia D."/>
            <person name="Grisard E.C."/>
            <person name="Hanna E.S."/>
            <person name="Jardim S.N."/>
            <person name="Laurino J."/>
            <person name="Leoi L.C.T."/>
            <person name="Lima L.F.A."/>
            <person name="Loureiro M.F."/>
            <person name="Lyra M.C.C.P."/>
            <person name="Madeira H.M.F."/>
            <person name="Manfio G.P."/>
            <person name="Maranhao A.Q."/>
            <person name="Martins W.S."/>
            <person name="di Mauro S.M.Z."/>
            <person name="de Medeiros S.R.B."/>
            <person name="Meissner R.V."/>
            <person name="Moreira M.A.M."/>
            <person name="Nascimento F.F."/>
            <person name="Nicolas M.F."/>
            <person name="Oliveira J.G."/>
            <person name="Oliveira S.C."/>
            <person name="Paixao R.F.C."/>
            <person name="Parente J.A."/>
            <person name="Pedrosa F.O."/>
            <person name="Pena S.D.J."/>
            <person name="Pereira J.O."/>
            <person name="Pereira M."/>
            <person name="Pinto L.S.R.C."/>
            <person name="Pinto L.S."/>
            <person name="Porto J.I.R."/>
            <person name="Potrich D.P."/>
            <person name="Ramalho-Neto C.E."/>
            <person name="Reis A.M.M."/>
            <person name="Rigo L.U."/>
            <person name="Rondinelli E."/>
            <person name="Santos E.B.P."/>
            <person name="Santos F.R."/>
            <person name="Schneider M.P.C."/>
            <person name="Seuanez H.N."/>
            <person name="Silva A.M.R."/>
            <person name="da Silva A.L.C."/>
            <person name="Silva D.W."/>
            <person name="Silva R."/>
            <person name="Simoes I.C."/>
            <person name="Simon D."/>
            <person name="Soares C.M.A."/>
            <person name="Soares R.B.A."/>
            <person name="Souza E.M."/>
            <person name="Souza K.R.L."/>
            <person name="Souza R.C."/>
            <person name="Steffens M.B.R."/>
            <person name="Steindel M."/>
            <person name="Teixeira S.R."/>
            <person name="Urmenyi T."/>
            <person name="Vettore A."/>
            <person name="Wassem R."/>
            <person name="Zaha A."/>
            <person name="Simpson A.J.G."/>
        </authorList>
    </citation>
    <scope>NUCLEOTIDE SEQUENCE [LARGE SCALE GENOMIC DNA]</scope>
    <source>
        <strain>ATCC 12472 / DSM 30191 / JCM 1249 / CCUG 213 / NBRC 12614 / NCIMB 9131 / NCTC 9757 / MK</strain>
    </source>
</reference>
<sequence length="61" mass="6785">MSNAKTVKVTLVKSLIGRLESHKACARGLGLKKIRQTVEVLDTPENRGMINKISYLLKFEG</sequence>
<organism>
    <name type="scientific">Chromobacterium violaceum (strain ATCC 12472 / DSM 30191 / JCM 1249 / CCUG 213 / NBRC 12614 / NCIMB 9131 / NCTC 9757 / MK)</name>
    <dbReference type="NCBI Taxonomy" id="243365"/>
    <lineage>
        <taxon>Bacteria</taxon>
        <taxon>Pseudomonadati</taxon>
        <taxon>Pseudomonadota</taxon>
        <taxon>Betaproteobacteria</taxon>
        <taxon>Neisseriales</taxon>
        <taxon>Chromobacteriaceae</taxon>
        <taxon>Chromobacterium</taxon>
    </lineage>
</organism>
<name>RL30_CHRVO</name>
<feature type="chain" id="PRO_0000273766" description="Large ribosomal subunit protein uL30">
    <location>
        <begin position="1"/>
        <end position="61"/>
    </location>
</feature>